<comment type="function">
    <text evidence="2 7">Acts as a guanine-nucleotide exchange factor (GEF). Promotes guanine-nucleotide exchange on ARF1, ARF3 and ARF6. Activates ARF factors through replacement of GDP with GTP (By similarity). The cell membrane form, in association with ARL4 proteins, recruits ARF6 to the plasma membrane (PubMed:17398095). Involved in neurite growth (By similarity).</text>
</comment>
<comment type="subunit">
    <text evidence="2 6 7 8 9 10">Heteromer. Composed of TAMALIN, CYTH2 and at least one GRM1 (By similarity). Interacts with ARRB1 (PubMed:17398095, PubMed:17623778). Interacts with ARL4D; the interaction is direct (PubMed:17398095). Directly interacts with CCDC120 through the coiled coil domain; this interaction stabilizes CCDC120, possibly by preventing its ubiquitination, and is required for neurite growth in neuroblastoma cells (PubMed:25326380). Interacts with ARF1 (PubMed:14654833). Interacts with FRMD4A (By similarity). Interacts (via N-terminal domain) with INAVA (via N-terminal domain) (PubMed:29420262).</text>
</comment>
<comment type="interaction">
    <interactant intactId="EBI-448974">
        <id>Q99418</id>
    </interactant>
    <interactant intactId="EBI-2902702">
        <id>P29274</id>
        <label>ADORA2A</label>
    </interactant>
    <organismsDiffer>false</organismsDiffer>
    <experiments>6</experiments>
</comment>
<comment type="interaction">
    <interactant intactId="EBI-448974">
        <id>Q99418</id>
    </interactant>
    <interactant intactId="EBI-447171">
        <id>P84077</id>
        <label>ARF1</label>
    </interactant>
    <organismsDiffer>false</organismsDiffer>
    <experiments>5</experiments>
</comment>
<comment type="interaction">
    <interactant intactId="EBI-448974">
        <id>Q99418</id>
    </interactant>
    <interactant intactId="EBI-988630">
        <id>Q9Y487</id>
        <label>ATP6V0A2</label>
    </interactant>
    <organismsDiffer>false</organismsDiffer>
    <experiments>2</experiments>
</comment>
<comment type="interaction">
    <interactant intactId="EBI-448974">
        <id>Q99418</id>
    </interactant>
    <interactant intactId="EBI-744556">
        <id>Q96HB5</id>
        <label>CCDC120</label>
    </interactant>
    <organismsDiffer>false</organismsDiffer>
    <experiments>7</experiments>
</comment>
<comment type="interaction">
    <interactant intactId="EBI-448974">
        <id>Q99418</id>
    </interactant>
    <interactant intactId="EBI-10185348">
        <id>Q96HB5-4</id>
        <label>CCDC120</label>
    </interactant>
    <organismsDiffer>false</organismsDiffer>
    <experiments>4</experiments>
</comment>
<comment type="interaction">
    <interactant intactId="EBI-448974">
        <id>Q99418</id>
    </interactant>
    <interactant intactId="EBI-741671">
        <id>Q969H4</id>
        <label>CNKSR1</label>
    </interactant>
    <organismsDiffer>false</organismsDiffer>
    <experiments>4</experiments>
</comment>
<comment type="interaction">
    <interactant intactId="EBI-448974">
        <id>Q99418</id>
    </interactant>
    <interactant intactId="EBI-7545562">
        <id>Q3KP66</id>
        <label>INAVA</label>
    </interactant>
    <organismsDiffer>false</organismsDiffer>
    <experiments>4</experiments>
</comment>
<comment type="interaction">
    <interactant intactId="EBI-448974">
        <id>Q99418</id>
    </interactant>
    <interactant intactId="EBI-52354453">
        <id>Q3KP66-1</id>
        <label>INAVA</label>
    </interactant>
    <organismsDiffer>false</organismsDiffer>
    <experiments>3</experiments>
</comment>
<comment type="interaction">
    <interactant intactId="EBI-448974">
        <id>Q99418</id>
    </interactant>
    <interactant intactId="EBI-4401965">
        <id>Q8WWN9</id>
        <label>IPCEF1</label>
    </interactant>
    <organismsDiffer>false</organismsDiffer>
    <experiments>8</experiments>
</comment>
<comment type="interaction">
    <interactant intactId="EBI-448974">
        <id>Q99418</id>
    </interactant>
    <interactant intactId="EBI-15855480">
        <id>Q99836-1</id>
        <label>MYD88</label>
    </interactant>
    <organismsDiffer>false</organismsDiffer>
    <experiments>3</experiments>
</comment>
<comment type="subcellular location">
    <subcellularLocation>
        <location evidence="7">Cell membrane</location>
        <topology evidence="7">Peripheral membrane protein</topology>
    </subcellularLocation>
    <subcellularLocation>
        <location evidence="7">Cytoplasm</location>
    </subcellularLocation>
    <subcellularLocation>
        <location evidence="2">Cell projection</location>
    </subcellularLocation>
    <subcellularLocation>
        <location evidence="2">Cell projection</location>
        <location evidence="2">Growth cone</location>
    </subcellularLocation>
    <subcellularLocation>
        <location evidence="2">Cell junction</location>
        <location evidence="2">Tight junction</location>
    </subcellularLocation>
    <subcellularLocation>
        <location evidence="2">Cell junction</location>
        <location evidence="2">Adherens junction</location>
    </subcellularLocation>
    <text evidence="2 7">Both isoform 1 and isoform 2 are recruited to the cell membrane through its association with ARL4A, ARL4C and ARL4D. They require also interaction with phosphoinositides for targeting to plasma membrane (PubMed:17398095). In differentiating neuroblastoma cells, colocalizes with CCDC120 in both neurite shaft and growth cone areas.</text>
</comment>
<comment type="alternative products">
    <event type="alternative splicing"/>
    <isoform>
        <id>Q99418-1</id>
        <name>1</name>
        <sequence type="displayed"/>
    </isoform>
    <isoform>
        <id>Q99418-2</id>
        <name>2</name>
        <sequence type="described" ref="VSP_006036"/>
    </isoform>
</comment>
<comment type="tissue specificity">
    <text evidence="13">Widely expressed.</text>
</comment>
<comment type="domain">
    <text>Binds via its PH domain to the inositol head group of phosphatidylinositol 3,4,5-trisphosphate. The PH domain is necessary and sufficient for plasma membrane relocalization.</text>
</comment>
<comment type="domain">
    <text evidence="1">Autoinhibited by its C-terminal basic region.</text>
</comment>
<comment type="domain">
    <text evidence="2">The coiled coil domain is involved in interaction with CCDC120.</text>
</comment>
<feature type="chain" id="PRO_0000120197" description="Cytohesin-2">
    <location>
        <begin position="1"/>
        <end position="400"/>
    </location>
</feature>
<feature type="domain" description="SEC7" evidence="5">
    <location>
        <begin position="72"/>
        <end position="201"/>
    </location>
</feature>
<feature type="domain" description="PH" evidence="4">
    <location>
        <begin position="259"/>
        <end position="376"/>
    </location>
</feature>
<feature type="region of interest" description="C-terminal autoinhibitory region" evidence="1">
    <location>
        <begin position="387"/>
        <end position="395"/>
    </location>
</feature>
<feature type="coiled-coil region" evidence="3">
    <location>
        <begin position="10"/>
        <end position="63"/>
    </location>
</feature>
<feature type="binding site" evidence="1">
    <location>
        <begin position="268"/>
        <end position="276"/>
    </location>
    <ligand>
        <name>a 1,2-diacyl-sn-glycero-3-phospho-(1D-myo-inositol-3,4,5-trisphosphate)</name>
        <dbReference type="ChEBI" id="CHEBI:57836"/>
    </ligand>
</feature>
<feature type="binding site" evidence="1">
    <location>
        <position position="280"/>
    </location>
    <ligand>
        <name>a 1,2-diacyl-sn-glycero-3-phospho-(1D-myo-inositol-3,4,5-trisphosphate)</name>
        <dbReference type="ChEBI" id="CHEBI:57836"/>
    </ligand>
</feature>
<feature type="binding site" evidence="1">
    <location>
        <position position="291"/>
    </location>
    <ligand>
        <name>a 1,2-diacyl-sn-glycero-3-phospho-(1D-myo-inositol-3,4,5-trisphosphate)</name>
        <dbReference type="ChEBI" id="CHEBI:57836"/>
    </ligand>
</feature>
<feature type="binding site" evidence="1">
    <location>
        <position position="301"/>
    </location>
    <ligand>
        <name>a 1,2-diacyl-sn-glycero-3-phospho-(1D-myo-inositol-3,4,5-trisphosphate)</name>
        <dbReference type="ChEBI" id="CHEBI:57836"/>
    </ligand>
</feature>
<feature type="binding site" evidence="1">
    <location>
        <position position="339"/>
    </location>
    <ligand>
        <name>a 1,2-diacyl-sn-glycero-3-phospho-(1D-myo-inositol-3,4,5-trisphosphate)</name>
        <dbReference type="ChEBI" id="CHEBI:57836"/>
    </ligand>
</feature>
<feature type="binding site" evidence="1">
    <location>
        <position position="350"/>
    </location>
    <ligand>
        <name>a 1,2-diacyl-sn-glycero-3-phospho-(1D-myo-inositol-3,4,5-trisphosphate)</name>
        <dbReference type="ChEBI" id="CHEBI:57836"/>
    </ligand>
</feature>
<feature type="binding site" evidence="1">
    <location>
        <position position="351"/>
    </location>
    <ligand>
        <name>a 1,2-diacyl-sn-glycero-3-phospho-(1D-myo-inositol-3,4,5-trisphosphate)</name>
        <dbReference type="ChEBI" id="CHEBI:57836"/>
    </ligand>
</feature>
<feature type="splice variant" id="VSP_006036" description="In isoform 2." evidence="11">
    <location>
        <position position="272"/>
    </location>
</feature>
<feature type="mutagenesis site" description="Inhibits GTP GDP exchange activity. Abolishes recruitment of ARF6 to the plasma membrane." evidence="7">
    <original>E</original>
    <variation>D</variation>
    <location>
        <position position="156"/>
    </location>
</feature>
<feature type="mutagenesis site" description="Does not reduce ARL4D GTP-dependent interaction but inhibits targeting to the plasma membrane mediated by ARL4C, ARL4C and ARL4D." evidence="7">
    <original>K</original>
    <variation>R</variation>
    <location>
        <position position="268"/>
    </location>
</feature>
<feature type="mutagenesis site" description="Does not reduce ARL4D GTP-dependent interaction but inhibits targeting to the plasma membrane mediated by ARL4C, ARL4C and ARL4D." evidence="7">
    <original>R</original>
    <variation>D</variation>
    <location>
        <position position="280"/>
    </location>
</feature>
<feature type="mutagenesis site" description="Reduces ARL4D GTP-dependent interaction and targeting to the plasma membrane mediated by ARL4C, ARL4C and ARL4D." evidence="7">
    <original>I</original>
    <variation>A</variation>
    <location>
        <position position="303"/>
    </location>
</feature>
<feature type="mutagenesis site" description="Reduces ARL4D GTP-dependent interaction and targeting to the plasma membrane mediated by ARL4C, ARL4C and ARL4D." evidence="7">
    <original>K</original>
    <variation>A</variation>
    <location>
        <position position="336"/>
    </location>
</feature>
<feature type="sequence conflict" description="In Ref. 4; AAH38713." evidence="12" ref="4">
    <original>L</original>
    <variation>Q</variation>
    <location>
        <position position="306"/>
    </location>
</feature>
<feature type="helix" evidence="16">
    <location>
        <begin position="63"/>
        <end position="74"/>
    </location>
</feature>
<feature type="helix" evidence="16">
    <location>
        <begin position="76"/>
        <end position="85"/>
    </location>
</feature>
<feature type="helix" evidence="16">
    <location>
        <begin position="93"/>
        <end position="102"/>
    </location>
</feature>
<feature type="helix" evidence="16">
    <location>
        <begin position="108"/>
        <end position="115"/>
    </location>
</feature>
<feature type="helix" evidence="16">
    <location>
        <begin position="120"/>
        <end position="131"/>
    </location>
</feature>
<feature type="helix" evidence="16">
    <location>
        <begin position="140"/>
        <end position="149"/>
    </location>
</feature>
<feature type="helix" evidence="16">
    <location>
        <begin position="157"/>
        <end position="174"/>
    </location>
</feature>
<feature type="strand" evidence="16">
    <location>
        <begin position="178"/>
        <end position="180"/>
    </location>
</feature>
<feature type="helix" evidence="16">
    <location>
        <begin position="182"/>
        <end position="200"/>
    </location>
</feature>
<feature type="helix" evidence="16">
    <location>
        <begin position="210"/>
        <end position="216"/>
    </location>
</feature>
<feature type="turn" evidence="16">
    <location>
        <begin position="217"/>
        <end position="220"/>
    </location>
</feature>
<feature type="strand" evidence="15">
    <location>
        <begin position="221"/>
        <end position="224"/>
    </location>
</feature>
<feature type="helix" evidence="16">
    <location>
        <begin position="228"/>
        <end position="240"/>
    </location>
</feature>
<keyword id="KW-0002">3D-structure</keyword>
<keyword id="KW-0025">Alternative splicing</keyword>
<keyword id="KW-0965">Cell junction</keyword>
<keyword id="KW-1003">Cell membrane</keyword>
<keyword id="KW-0966">Cell projection</keyword>
<keyword id="KW-0175">Coiled coil</keyword>
<keyword id="KW-0963">Cytoplasm</keyword>
<keyword id="KW-0344">Guanine-nucleotide releasing factor</keyword>
<keyword id="KW-0446">Lipid-binding</keyword>
<keyword id="KW-0472">Membrane</keyword>
<keyword id="KW-1267">Proteomics identification</keyword>
<keyword id="KW-1185">Reference proteome</keyword>
<keyword id="KW-0796">Tight junction</keyword>
<name>CYH2_HUMAN</name>
<gene>
    <name evidence="14" type="primary">CYTH2</name>
    <name type="synonym">ARNO</name>
    <name type="synonym">PSCD2</name>
    <name type="synonym">PSCD2L</name>
</gene>
<organism>
    <name type="scientific">Homo sapiens</name>
    <name type="common">Human</name>
    <dbReference type="NCBI Taxonomy" id="9606"/>
    <lineage>
        <taxon>Eukaryota</taxon>
        <taxon>Metazoa</taxon>
        <taxon>Chordata</taxon>
        <taxon>Craniata</taxon>
        <taxon>Vertebrata</taxon>
        <taxon>Euteleostomi</taxon>
        <taxon>Mammalia</taxon>
        <taxon>Eutheria</taxon>
        <taxon>Euarchontoglires</taxon>
        <taxon>Primates</taxon>
        <taxon>Haplorrhini</taxon>
        <taxon>Catarrhini</taxon>
        <taxon>Hominidae</taxon>
        <taxon>Homo</taxon>
    </lineage>
</organism>
<accession>Q99418</accession>
<accession>A8K8P0</accession>
<accession>Q8IXY9</accession>
<accession>Q92958</accession>
<sequence length="400" mass="46546">MEDGVYEPPDLTPEERMELENIRRRKQELLVEIQRLREELSEAMSEVEGLEANEGSKTLQRNRKMAMGRKKFNMDPKKGIQFLVENELLQNTPEEIARFLYKGEGLNKTAIGDYLGEREELNLAVLHAFVDLHEFTDLNLVQALRQFLWSFRLPGEAQKIDRMMEAFAQRYCLCNPGVFQSTDTCYVLSFAVIMLNTSLHNPNVRDKPGLERFVAMNRGINEGGDLPEELLRNLYDSIRNEPFKIPEDDGNDLTHTFFNPDREGWLLKLGGGRVKTWKRRWFILTDNCLYYFEYTTDKEPRGIIPLENLSIREVDDPRKPNCFELYIPNNKGQLIKACKTEADGRVVEGNHMVYRISAPTQEEKDEWIKSIQAAVSVDPFYEMLAARKKRISVKKKQEQP</sequence>
<proteinExistence type="evidence at protein level"/>
<protein>
    <recommendedName>
        <fullName>Cytohesin-2</fullName>
    </recommendedName>
    <alternativeName>
        <fullName>ARF exchange factor</fullName>
    </alternativeName>
    <alternativeName>
        <fullName>ARF nucleotide-binding site opener</fullName>
        <shortName>Protein ARNO</shortName>
    </alternativeName>
    <alternativeName>
        <fullName>PH, SEC7 and coiled-coil domain-containing protein 2</fullName>
    </alternativeName>
</protein>
<dbReference type="EMBL" id="X99753">
    <property type="protein sequence ID" value="CAA68084.1"/>
    <property type="molecule type" value="mRNA"/>
</dbReference>
<dbReference type="EMBL" id="U70728">
    <property type="protein sequence ID" value="AAB09591.1"/>
    <property type="molecule type" value="mRNA"/>
</dbReference>
<dbReference type="EMBL" id="AK292405">
    <property type="protein sequence ID" value="BAF85094.1"/>
    <property type="molecule type" value="mRNA"/>
</dbReference>
<dbReference type="EMBL" id="BC004361">
    <property type="protein sequence ID" value="AAH04361.1"/>
    <property type="molecule type" value="mRNA"/>
</dbReference>
<dbReference type="EMBL" id="BC038713">
    <property type="protein sequence ID" value="AAH38713.1"/>
    <property type="molecule type" value="mRNA"/>
</dbReference>
<dbReference type="CCDS" id="CCDS12722.1">
    <molecule id="Q99418-2"/>
</dbReference>
<dbReference type="CCDS" id="CCDS86786.1">
    <molecule id="Q99418-1"/>
</dbReference>
<dbReference type="RefSeq" id="NP_004219.3">
    <molecule id="Q99418-2"/>
    <property type="nucleotide sequence ID" value="NM_004228.6"/>
</dbReference>
<dbReference type="RefSeq" id="NP_059431.1">
    <molecule id="Q99418-1"/>
    <property type="nucleotide sequence ID" value="NM_017457.6"/>
</dbReference>
<dbReference type="RefSeq" id="XP_047295639.1">
    <molecule id="Q99418-2"/>
    <property type="nucleotide sequence ID" value="XM_047439683.1"/>
</dbReference>
<dbReference type="PDB" id="1PBV">
    <property type="method" value="X-ray"/>
    <property type="resolution" value="2.00 A"/>
    <property type="chains" value="A=52-246"/>
</dbReference>
<dbReference type="PDB" id="1R8M">
    <property type="method" value="X-ray"/>
    <property type="resolution" value="1.70 A"/>
    <property type="chains" value="E=50-252"/>
</dbReference>
<dbReference type="PDB" id="1R8Q">
    <property type="method" value="X-ray"/>
    <property type="resolution" value="1.86 A"/>
    <property type="chains" value="E/F=50-252"/>
</dbReference>
<dbReference type="PDB" id="1R8S">
    <property type="method" value="X-ray"/>
    <property type="resolution" value="1.46 A"/>
    <property type="chains" value="E=50-252"/>
</dbReference>
<dbReference type="PDB" id="1S9D">
    <property type="method" value="X-ray"/>
    <property type="resolution" value="1.80 A"/>
    <property type="chains" value="E=50-252"/>
</dbReference>
<dbReference type="PDB" id="4JMI">
    <property type="method" value="X-ray"/>
    <property type="resolution" value="1.50 A"/>
    <property type="chains" value="A=56-251"/>
</dbReference>
<dbReference type="PDB" id="4JMO">
    <property type="method" value="X-ray"/>
    <property type="resolution" value="1.80 A"/>
    <property type="chains" value="A=56-251"/>
</dbReference>
<dbReference type="PDB" id="4JWL">
    <property type="method" value="X-ray"/>
    <property type="resolution" value="1.95 A"/>
    <property type="chains" value="A=56-251"/>
</dbReference>
<dbReference type="PDB" id="4JXH">
    <property type="method" value="X-ray"/>
    <property type="resolution" value="1.47 A"/>
    <property type="chains" value="A=56-251"/>
</dbReference>
<dbReference type="PDB" id="4L5M">
    <property type="method" value="X-ray"/>
    <property type="resolution" value="1.80 A"/>
    <property type="chains" value="A=56-251"/>
</dbReference>
<dbReference type="PDB" id="4Z21">
    <property type="method" value="X-ray"/>
    <property type="resolution" value="2.05 A"/>
    <property type="chains" value="A=51-252"/>
</dbReference>
<dbReference type="PDBsum" id="1PBV"/>
<dbReference type="PDBsum" id="1R8M"/>
<dbReference type="PDBsum" id="1R8Q"/>
<dbReference type="PDBsum" id="1R8S"/>
<dbReference type="PDBsum" id="1S9D"/>
<dbReference type="PDBsum" id="4JMI"/>
<dbReference type="PDBsum" id="4JMO"/>
<dbReference type="PDBsum" id="4JWL"/>
<dbReference type="PDBsum" id="4JXH"/>
<dbReference type="PDBsum" id="4L5M"/>
<dbReference type="PDBsum" id="4Z21"/>
<dbReference type="BMRB" id="Q99418"/>
<dbReference type="SASBDB" id="Q99418"/>
<dbReference type="SMR" id="Q99418"/>
<dbReference type="BioGRID" id="114687">
    <property type="interactions" value="52"/>
</dbReference>
<dbReference type="CORUM" id="Q99418"/>
<dbReference type="DIP" id="DIP-31598N"/>
<dbReference type="FunCoup" id="Q99418">
    <property type="interactions" value="2304"/>
</dbReference>
<dbReference type="IntAct" id="Q99418">
    <property type="interactions" value="29"/>
</dbReference>
<dbReference type="MINT" id="Q99418"/>
<dbReference type="STRING" id="9606.ENSP00000493357"/>
<dbReference type="BindingDB" id="Q99418"/>
<dbReference type="ChEMBL" id="CHEMBL5995"/>
<dbReference type="DrugBank" id="DB03401">
    <property type="generic name" value="1D-myo-inositol 1,4,5-trisphosphate"/>
</dbReference>
<dbReference type="DrugBank" id="DB07348">
    <property type="generic name" value="Brefeldin A"/>
</dbReference>
<dbReference type="DrugBank" id="DB01942">
    <property type="generic name" value="Formic acid"/>
</dbReference>
<dbReference type="DrugBank" id="DB01863">
    <property type="generic name" value="Inositol 1,3,4,5-Tetrakisphosphate"/>
</dbReference>
<dbReference type="DrugBank" id="DB04530">
    <property type="generic name" value="S,S-(2-Hydroxyethyl)Thiocysteine"/>
</dbReference>
<dbReference type="iPTMnet" id="Q99418"/>
<dbReference type="PhosphoSitePlus" id="Q99418"/>
<dbReference type="BioMuta" id="CYTH2"/>
<dbReference type="DMDM" id="13124707"/>
<dbReference type="jPOST" id="Q99418"/>
<dbReference type="MassIVE" id="Q99418"/>
<dbReference type="PaxDb" id="9606-ENSP00000408236"/>
<dbReference type="PeptideAtlas" id="Q99418"/>
<dbReference type="ProteomicsDB" id="78258">
    <molecule id="Q99418-1"/>
</dbReference>
<dbReference type="ProteomicsDB" id="78259">
    <molecule id="Q99418-2"/>
</dbReference>
<dbReference type="Pumba" id="Q99418"/>
<dbReference type="Antibodypedia" id="4437">
    <property type="antibodies" value="301 antibodies from 32 providers"/>
</dbReference>
<dbReference type="DNASU" id="9266"/>
<dbReference type="Ensembl" id="ENST00000452733.7">
    <molecule id="Q99418-2"/>
    <property type="protein sequence ID" value="ENSP00000408236.2"/>
    <property type="gene ID" value="ENSG00000105443.17"/>
</dbReference>
<dbReference type="Ensembl" id="ENST00000641098.1">
    <molecule id="Q99418-1"/>
    <property type="protein sequence ID" value="ENSP00000493357.1"/>
    <property type="gene ID" value="ENSG00000105443.17"/>
</dbReference>
<dbReference type="GeneID" id="9266"/>
<dbReference type="KEGG" id="hsa:9266"/>
<dbReference type="MANE-Select" id="ENST00000452733.7">
    <molecule id="Q99418-2"/>
    <property type="protein sequence ID" value="ENSP00000408236.2"/>
    <property type="RefSeq nucleotide sequence ID" value="NM_004228.7"/>
    <property type="RefSeq protein sequence ID" value="NP_004219.3"/>
</dbReference>
<dbReference type="UCSC" id="uc002pjj.5">
    <molecule id="Q99418-1"/>
    <property type="organism name" value="human"/>
</dbReference>
<dbReference type="AGR" id="HGNC:9502"/>
<dbReference type="CTD" id="9266"/>
<dbReference type="DisGeNET" id="9266"/>
<dbReference type="GeneCards" id="CYTH2"/>
<dbReference type="HGNC" id="HGNC:9502">
    <property type="gene designation" value="CYTH2"/>
</dbReference>
<dbReference type="HPA" id="ENSG00000105443">
    <property type="expression patterns" value="Low tissue specificity"/>
</dbReference>
<dbReference type="MIM" id="602488">
    <property type="type" value="gene"/>
</dbReference>
<dbReference type="neXtProt" id="NX_Q99418"/>
<dbReference type="OpenTargets" id="ENSG00000105443"/>
<dbReference type="PharmGKB" id="PA33849"/>
<dbReference type="VEuPathDB" id="HostDB:ENSG00000105443"/>
<dbReference type="eggNOG" id="KOG0930">
    <property type="taxonomic scope" value="Eukaryota"/>
</dbReference>
<dbReference type="GeneTree" id="ENSGT00940000160074"/>
<dbReference type="HOGENOM" id="CLU_032820_3_0_1"/>
<dbReference type="InParanoid" id="Q99418"/>
<dbReference type="OMA" id="GASHWRA"/>
<dbReference type="OrthoDB" id="430364at2759"/>
<dbReference type="PAN-GO" id="Q99418">
    <property type="GO annotations" value="0 GO annotations based on evolutionary models"/>
</dbReference>
<dbReference type="PhylomeDB" id="Q99418"/>
<dbReference type="TreeFam" id="TF352091"/>
<dbReference type="PathwayCommons" id="Q99418"/>
<dbReference type="Reactome" id="R-HSA-6811438">
    <property type="pathway name" value="Intra-Golgi traffic"/>
</dbReference>
<dbReference type="SignaLink" id="Q99418"/>
<dbReference type="SIGNOR" id="Q99418"/>
<dbReference type="BioGRID-ORCS" id="9266">
    <property type="hits" value="12 hits in 1157 CRISPR screens"/>
</dbReference>
<dbReference type="CD-CODE" id="FB4E32DD">
    <property type="entry name" value="Presynaptic clusters and postsynaptic densities"/>
</dbReference>
<dbReference type="ChiTaRS" id="CYTH2">
    <property type="organism name" value="human"/>
</dbReference>
<dbReference type="EvolutionaryTrace" id="Q99418"/>
<dbReference type="GeneWiki" id="CYTH2"/>
<dbReference type="GenomeRNAi" id="9266"/>
<dbReference type="Pharos" id="Q99418">
    <property type="development level" value="Tbio"/>
</dbReference>
<dbReference type="PRO" id="PR:Q99418"/>
<dbReference type="Proteomes" id="UP000005640">
    <property type="component" value="Chromosome 19"/>
</dbReference>
<dbReference type="RNAct" id="Q99418">
    <property type="molecule type" value="protein"/>
</dbReference>
<dbReference type="Bgee" id="ENSG00000105443">
    <property type="expression patterns" value="Expressed in ganglionic eminence and 197 other cell types or tissues"/>
</dbReference>
<dbReference type="ExpressionAtlas" id="Q99418">
    <property type="expression patterns" value="baseline and differential"/>
</dbReference>
<dbReference type="GO" id="GO:0005912">
    <property type="term" value="C:adherens junction"/>
    <property type="evidence" value="ECO:0007669"/>
    <property type="project" value="UniProtKB-SubCell"/>
</dbReference>
<dbReference type="GO" id="GO:0005923">
    <property type="term" value="C:bicellular tight junction"/>
    <property type="evidence" value="ECO:0007669"/>
    <property type="project" value="UniProtKB-SubCell"/>
</dbReference>
<dbReference type="GO" id="GO:0005737">
    <property type="term" value="C:cytoplasm"/>
    <property type="evidence" value="ECO:0000314"/>
    <property type="project" value="UniProtKB"/>
</dbReference>
<dbReference type="GO" id="GO:0005829">
    <property type="term" value="C:cytosol"/>
    <property type="evidence" value="ECO:0000304"/>
    <property type="project" value="Reactome"/>
</dbReference>
<dbReference type="GO" id="GO:0000139">
    <property type="term" value="C:Golgi membrane"/>
    <property type="evidence" value="ECO:0000304"/>
    <property type="project" value="Reactome"/>
</dbReference>
<dbReference type="GO" id="GO:0030426">
    <property type="term" value="C:growth cone"/>
    <property type="evidence" value="ECO:0007669"/>
    <property type="project" value="UniProtKB-SubCell"/>
</dbReference>
<dbReference type="GO" id="GO:0016020">
    <property type="term" value="C:membrane"/>
    <property type="evidence" value="ECO:0000304"/>
    <property type="project" value="ProtInc"/>
</dbReference>
<dbReference type="GO" id="GO:0005886">
    <property type="term" value="C:plasma membrane"/>
    <property type="evidence" value="ECO:0000314"/>
    <property type="project" value="UniProtKB"/>
</dbReference>
<dbReference type="GO" id="GO:0005085">
    <property type="term" value="F:guanyl-nucleotide exchange factor activity"/>
    <property type="evidence" value="ECO:0000250"/>
    <property type="project" value="UniProtKB"/>
</dbReference>
<dbReference type="GO" id="GO:0070679">
    <property type="term" value="F:inositol 1,4,5 trisphosphate binding"/>
    <property type="evidence" value="ECO:0000250"/>
    <property type="project" value="UniProtKB"/>
</dbReference>
<dbReference type="GO" id="GO:0008289">
    <property type="term" value="F:lipid binding"/>
    <property type="evidence" value="ECO:0007669"/>
    <property type="project" value="UniProtKB-KW"/>
</dbReference>
<dbReference type="GO" id="GO:0030036">
    <property type="term" value="P:actin cytoskeleton organization"/>
    <property type="evidence" value="ECO:0000304"/>
    <property type="project" value="ProtInc"/>
</dbReference>
<dbReference type="GO" id="GO:0006897">
    <property type="term" value="P:endocytosis"/>
    <property type="evidence" value="ECO:0000304"/>
    <property type="project" value="ProtInc"/>
</dbReference>
<dbReference type="GO" id="GO:0032012">
    <property type="term" value="P:regulation of ARF protein signal transduction"/>
    <property type="evidence" value="ECO:0007669"/>
    <property type="project" value="InterPro"/>
</dbReference>
<dbReference type="CDD" id="cd01252">
    <property type="entry name" value="PH_GRP1-like"/>
    <property type="match status" value="1"/>
</dbReference>
<dbReference type="CDD" id="cd00171">
    <property type="entry name" value="Sec7"/>
    <property type="match status" value="1"/>
</dbReference>
<dbReference type="FunFam" id="1.10.1000.11:FF:000002">
    <property type="entry name" value="Cytohesin 1"/>
    <property type="match status" value="1"/>
</dbReference>
<dbReference type="FunFam" id="1.10.220.20:FF:000003">
    <property type="entry name" value="Cytohesin 1"/>
    <property type="match status" value="1"/>
</dbReference>
<dbReference type="FunFam" id="2.30.29.30:FF:000009">
    <property type="entry name" value="Cytohesin 1"/>
    <property type="match status" value="1"/>
</dbReference>
<dbReference type="Gene3D" id="1.10.220.20">
    <property type="match status" value="1"/>
</dbReference>
<dbReference type="Gene3D" id="1.10.1000.11">
    <property type="entry name" value="Arf Nucleotide-binding Site Opener,domain 2"/>
    <property type="match status" value="1"/>
</dbReference>
<dbReference type="Gene3D" id="2.30.29.30">
    <property type="entry name" value="Pleckstrin-homology domain (PH domain)/Phosphotyrosine-binding domain (PTB)"/>
    <property type="match status" value="1"/>
</dbReference>
<dbReference type="InterPro" id="IPR011993">
    <property type="entry name" value="PH-like_dom_sf"/>
</dbReference>
<dbReference type="InterPro" id="IPR001849">
    <property type="entry name" value="PH_domain"/>
</dbReference>
<dbReference type="InterPro" id="IPR023394">
    <property type="entry name" value="Sec7_C_sf"/>
</dbReference>
<dbReference type="InterPro" id="IPR000904">
    <property type="entry name" value="Sec7_dom"/>
</dbReference>
<dbReference type="InterPro" id="IPR035999">
    <property type="entry name" value="Sec7_dom_sf"/>
</dbReference>
<dbReference type="PANTHER" id="PTHR10663:SF343">
    <property type="entry name" value="CYTOHESIN-2"/>
    <property type="match status" value="1"/>
</dbReference>
<dbReference type="PANTHER" id="PTHR10663">
    <property type="entry name" value="GUANYL-NUCLEOTIDE EXCHANGE FACTOR"/>
    <property type="match status" value="1"/>
</dbReference>
<dbReference type="Pfam" id="PF00169">
    <property type="entry name" value="PH"/>
    <property type="match status" value="1"/>
</dbReference>
<dbReference type="Pfam" id="PF01369">
    <property type="entry name" value="Sec7"/>
    <property type="match status" value="1"/>
</dbReference>
<dbReference type="SMART" id="SM00233">
    <property type="entry name" value="PH"/>
    <property type="match status" value="1"/>
</dbReference>
<dbReference type="SMART" id="SM00222">
    <property type="entry name" value="Sec7"/>
    <property type="match status" value="1"/>
</dbReference>
<dbReference type="SUPFAM" id="SSF50729">
    <property type="entry name" value="PH domain-like"/>
    <property type="match status" value="1"/>
</dbReference>
<dbReference type="SUPFAM" id="SSF48425">
    <property type="entry name" value="Sec7 domain"/>
    <property type="match status" value="1"/>
</dbReference>
<dbReference type="PROSITE" id="PS50003">
    <property type="entry name" value="PH_DOMAIN"/>
    <property type="match status" value="1"/>
</dbReference>
<dbReference type="PROSITE" id="PS50190">
    <property type="entry name" value="SEC7"/>
    <property type="match status" value="1"/>
</dbReference>
<reference key="1">
    <citation type="journal article" date="1996" name="Nature">
        <title>A human exchange factor for ARF contains Sec7- and pleckstrin-homology domains.</title>
        <authorList>
            <person name="Chardin P."/>
            <person name="Paris S."/>
            <person name="Antonny B."/>
            <person name="Robineau S."/>
            <person name="Bernaud-Dufour S."/>
            <person name="Jackson C.L."/>
            <person name="Chabre M."/>
        </authorList>
    </citation>
    <scope>NUCLEOTIDE SEQUENCE [MRNA] (ISOFORM 1)</scope>
    <source>
        <tissue>Brain</tissue>
    </source>
</reference>
<reference key="2">
    <citation type="journal article" date="1998" name="J. Biol. Chem.">
        <title>ARNO is a guanine nucleotide exchange factor for ADP-ribosylation factor 6.</title>
        <authorList>
            <person name="Frank S.F."/>
            <person name="Upender S.K."/>
            <person name="Hansen S.H."/>
            <person name="Casanova J.E."/>
        </authorList>
    </citation>
    <scope>NUCLEOTIDE SEQUENCE [MRNA] (ISOFORM 2)</scope>
    <scope>CHARACTERIZATION</scope>
    <source>
        <tissue>Brain</tissue>
    </source>
</reference>
<reference key="3">
    <citation type="journal article" date="2004" name="Nat. Genet.">
        <title>Complete sequencing and characterization of 21,243 full-length human cDNAs.</title>
        <authorList>
            <person name="Ota T."/>
            <person name="Suzuki Y."/>
            <person name="Nishikawa T."/>
            <person name="Otsuki T."/>
            <person name="Sugiyama T."/>
            <person name="Irie R."/>
            <person name="Wakamatsu A."/>
            <person name="Hayashi K."/>
            <person name="Sato H."/>
            <person name="Nagai K."/>
            <person name="Kimura K."/>
            <person name="Makita H."/>
            <person name="Sekine M."/>
            <person name="Obayashi M."/>
            <person name="Nishi T."/>
            <person name="Shibahara T."/>
            <person name="Tanaka T."/>
            <person name="Ishii S."/>
            <person name="Yamamoto J."/>
            <person name="Saito K."/>
            <person name="Kawai Y."/>
            <person name="Isono Y."/>
            <person name="Nakamura Y."/>
            <person name="Nagahari K."/>
            <person name="Murakami K."/>
            <person name="Yasuda T."/>
            <person name="Iwayanagi T."/>
            <person name="Wagatsuma M."/>
            <person name="Shiratori A."/>
            <person name="Sudo H."/>
            <person name="Hosoiri T."/>
            <person name="Kaku Y."/>
            <person name="Kodaira H."/>
            <person name="Kondo H."/>
            <person name="Sugawara M."/>
            <person name="Takahashi M."/>
            <person name="Kanda K."/>
            <person name="Yokoi T."/>
            <person name="Furuya T."/>
            <person name="Kikkawa E."/>
            <person name="Omura Y."/>
            <person name="Abe K."/>
            <person name="Kamihara K."/>
            <person name="Katsuta N."/>
            <person name="Sato K."/>
            <person name="Tanikawa M."/>
            <person name="Yamazaki M."/>
            <person name="Ninomiya K."/>
            <person name="Ishibashi T."/>
            <person name="Yamashita H."/>
            <person name="Murakawa K."/>
            <person name="Fujimori K."/>
            <person name="Tanai H."/>
            <person name="Kimata M."/>
            <person name="Watanabe M."/>
            <person name="Hiraoka S."/>
            <person name="Chiba Y."/>
            <person name="Ishida S."/>
            <person name="Ono Y."/>
            <person name="Takiguchi S."/>
            <person name="Watanabe S."/>
            <person name="Yosida M."/>
            <person name="Hotuta T."/>
            <person name="Kusano J."/>
            <person name="Kanehori K."/>
            <person name="Takahashi-Fujii A."/>
            <person name="Hara H."/>
            <person name="Tanase T.-O."/>
            <person name="Nomura Y."/>
            <person name="Togiya S."/>
            <person name="Komai F."/>
            <person name="Hara R."/>
            <person name="Takeuchi K."/>
            <person name="Arita M."/>
            <person name="Imose N."/>
            <person name="Musashino K."/>
            <person name="Yuuki H."/>
            <person name="Oshima A."/>
            <person name="Sasaki N."/>
            <person name="Aotsuka S."/>
            <person name="Yoshikawa Y."/>
            <person name="Matsunawa H."/>
            <person name="Ichihara T."/>
            <person name="Shiohata N."/>
            <person name="Sano S."/>
            <person name="Moriya S."/>
            <person name="Momiyama H."/>
            <person name="Satoh N."/>
            <person name="Takami S."/>
            <person name="Terashima Y."/>
            <person name="Suzuki O."/>
            <person name="Nakagawa S."/>
            <person name="Senoh A."/>
            <person name="Mizoguchi H."/>
            <person name="Goto Y."/>
            <person name="Shimizu F."/>
            <person name="Wakebe H."/>
            <person name="Hishigaki H."/>
            <person name="Watanabe T."/>
            <person name="Sugiyama A."/>
            <person name="Takemoto M."/>
            <person name="Kawakami B."/>
            <person name="Yamazaki M."/>
            <person name="Watanabe K."/>
            <person name="Kumagai A."/>
            <person name="Itakura S."/>
            <person name="Fukuzumi Y."/>
            <person name="Fujimori Y."/>
            <person name="Komiyama M."/>
            <person name="Tashiro H."/>
            <person name="Tanigami A."/>
            <person name="Fujiwara T."/>
            <person name="Ono T."/>
            <person name="Yamada K."/>
            <person name="Fujii Y."/>
            <person name="Ozaki K."/>
            <person name="Hirao M."/>
            <person name="Ohmori Y."/>
            <person name="Kawabata A."/>
            <person name="Hikiji T."/>
            <person name="Kobatake N."/>
            <person name="Inagaki H."/>
            <person name="Ikema Y."/>
            <person name="Okamoto S."/>
            <person name="Okitani R."/>
            <person name="Kawakami T."/>
            <person name="Noguchi S."/>
            <person name="Itoh T."/>
            <person name="Shigeta K."/>
            <person name="Senba T."/>
            <person name="Matsumura K."/>
            <person name="Nakajima Y."/>
            <person name="Mizuno T."/>
            <person name="Morinaga M."/>
            <person name="Sasaki M."/>
            <person name="Togashi T."/>
            <person name="Oyama M."/>
            <person name="Hata H."/>
            <person name="Watanabe M."/>
            <person name="Komatsu T."/>
            <person name="Mizushima-Sugano J."/>
            <person name="Satoh T."/>
            <person name="Shirai Y."/>
            <person name="Takahashi Y."/>
            <person name="Nakagawa K."/>
            <person name="Okumura K."/>
            <person name="Nagase T."/>
            <person name="Nomura N."/>
            <person name="Kikuchi H."/>
            <person name="Masuho Y."/>
            <person name="Yamashita R."/>
            <person name="Nakai K."/>
            <person name="Yada T."/>
            <person name="Nakamura Y."/>
            <person name="Ohara O."/>
            <person name="Isogai T."/>
            <person name="Sugano S."/>
        </authorList>
    </citation>
    <scope>NUCLEOTIDE SEQUENCE [LARGE SCALE MRNA] (ISOFORM 1)</scope>
    <source>
        <tissue>Testis</tissue>
    </source>
</reference>
<reference key="4">
    <citation type="journal article" date="2004" name="Genome Res.">
        <title>The status, quality, and expansion of the NIH full-length cDNA project: the Mammalian Gene Collection (MGC).</title>
        <authorList>
            <consortium name="The MGC Project Team"/>
        </authorList>
    </citation>
    <scope>NUCLEOTIDE SEQUENCE [LARGE SCALE MRNA] (ISOFORM 1)</scope>
    <source>
        <tissue>Lung</tissue>
        <tissue>Testis</tissue>
    </source>
</reference>
<reference key="5">
    <citation type="journal article" date="2007" name="J. Cell Sci.">
        <title>The calcium-sensing receptor changes cell shape via a beta-arrestin-1 ARNO ARF6 ELMO protein network.</title>
        <authorList>
            <person name="Bouschet T."/>
            <person name="Martin S."/>
            <person name="Kanamarlapudi V."/>
            <person name="Mundell S."/>
            <person name="Henley J.M."/>
        </authorList>
    </citation>
    <scope>INTERACTION WITH ARRB1</scope>
</reference>
<reference key="6">
    <citation type="journal article" date="2007" name="Curr. Biol.">
        <title>The Arl4 family of small G proteins can recruit the cytohesin Arf6 exchange factors to the plasma membrane.</title>
        <authorList>
            <person name="Hofmann I."/>
            <person name="Thompson A."/>
            <person name="Sanderson C.M."/>
            <person name="Munro S."/>
        </authorList>
    </citation>
    <scope>FUNCTION</scope>
    <scope>INTERACTION WITH ARL4D AND ARRB1</scope>
    <scope>MUTAGENESIS OF GLU-156; LYS-268; ARG-280; ILE-303 AND LYS-336</scope>
    <scope>SUBCELLULAR LOCATION</scope>
</reference>
<reference key="7">
    <citation type="journal article" date="2014" name="J. Biol. Chem.">
        <title>Arf6 guanine nucleotide exchange factor cytohesin-2 binds to CCDC120 and is transported along neurites to mediate neurite growth.</title>
        <authorList>
            <person name="Torii T."/>
            <person name="Miyamoto Y."/>
            <person name="Tago K."/>
            <person name="Sango K."/>
            <person name="Nakamura K."/>
            <person name="Sanbe A."/>
            <person name="Tanoue A."/>
            <person name="Yamauchi J."/>
        </authorList>
    </citation>
    <scope>INTERACTION WITH CCDC120</scope>
</reference>
<reference key="8">
    <citation type="journal article" date="2018" name="Science">
        <title>C1orf106 is a colitis risk gene that regulates stability of epithelial adherens junctions.</title>
        <authorList>
            <person name="Mohanan V."/>
            <person name="Nakata T."/>
            <person name="Desch A.N."/>
            <person name="Levesque C."/>
            <person name="Boroughs A."/>
            <person name="Guzman G."/>
            <person name="Cao Z."/>
            <person name="Creasey E."/>
            <person name="Yao J."/>
            <person name="Boucher G."/>
            <person name="Charron G."/>
            <person name="Bhan A.K."/>
            <person name="Schenone M."/>
            <person name="Carr S.A."/>
            <person name="Reinecker H.C."/>
            <person name="Daly M.J."/>
            <person name="Rioux J.D."/>
            <person name="Lassen K.G."/>
            <person name="Xavier R.J."/>
        </authorList>
    </citation>
    <scope>INTERACTION WITH INAVA</scope>
</reference>
<reference key="9">
    <citation type="journal article" date="1998" name="Cell">
        <title>Structure of the guanine nucleotide exchange factor Sec7 domain of human ARNO and analysis of the interaction with ARF GTPase.</title>
        <authorList>
            <person name="Mossessova E."/>
            <person name="Gulbis J.M."/>
            <person name="Goldberg J."/>
        </authorList>
    </citation>
    <scope>X-RAY CRYSTALLOGRAPHY (2.2 ANGSTROMS) OF 51-252</scope>
</reference>
<reference key="10">
    <citation type="journal article" date="1998" name="Nature">
        <title>Structure of the Sec7 domain of the Arf exchange factor ARNO.</title>
        <authorList>
            <person name="Cherfils J."/>
            <person name="Menetrey J."/>
            <person name="Mathieu M."/>
            <person name="le Bras G."/>
            <person name="Robineau S."/>
            <person name="Beraud-Dufour S."/>
            <person name="Antonny B."/>
            <person name="Chardin P."/>
        </authorList>
    </citation>
    <scope>X-RAY CRYSTALLOGRAPHY (2.0 ANGSTROMS) OF 51-252</scope>
</reference>
<reference key="11">
    <citation type="journal article" date="2003" name="Nature">
        <title>Structural snapshots of the mechanism and inhibition of a guanine nucleotide exchange factor.</title>
        <authorList>
            <person name="Renault L."/>
            <person name="Guibert B."/>
            <person name="Cherfils J."/>
        </authorList>
    </citation>
    <scope>X-RAY CRYSTALLOGRAPHY (1.8 ANGSTROMS) OF 50-252 IN COMPLEX WITH ARF1; GDP AND BREFELDIN A</scope>
</reference>
<evidence type="ECO:0000250" key="1"/>
<evidence type="ECO:0000250" key="2">
    <source>
        <dbReference type="UniProtKB" id="P63034"/>
    </source>
</evidence>
<evidence type="ECO:0000255" key="3"/>
<evidence type="ECO:0000255" key="4">
    <source>
        <dbReference type="PROSITE-ProRule" id="PRU00145"/>
    </source>
</evidence>
<evidence type="ECO:0000255" key="5">
    <source>
        <dbReference type="PROSITE-ProRule" id="PRU00189"/>
    </source>
</evidence>
<evidence type="ECO:0000269" key="6">
    <source>
    </source>
</evidence>
<evidence type="ECO:0000269" key="7">
    <source>
    </source>
</evidence>
<evidence type="ECO:0000269" key="8">
    <source>
    </source>
</evidence>
<evidence type="ECO:0000269" key="9">
    <source>
    </source>
</evidence>
<evidence type="ECO:0000269" key="10">
    <source>
    </source>
</evidence>
<evidence type="ECO:0000303" key="11">
    <source>
    </source>
</evidence>
<evidence type="ECO:0000305" key="12"/>
<evidence type="ECO:0000305" key="13">
    <source>
    </source>
</evidence>
<evidence type="ECO:0000312" key="14">
    <source>
        <dbReference type="HGNC" id="HGNC:9502"/>
    </source>
</evidence>
<evidence type="ECO:0007829" key="15">
    <source>
        <dbReference type="PDB" id="1R8M"/>
    </source>
</evidence>
<evidence type="ECO:0007829" key="16">
    <source>
        <dbReference type="PDB" id="1R8S"/>
    </source>
</evidence>